<comment type="similarity">
    <text evidence="1">Belongs to the UPF0412 family.</text>
</comment>
<name>YAAI_ECO55</name>
<accession>B7L4D7</accession>
<sequence>MKSVFTISASLAISLMLCCTAQANDHKILGVIAMPRNETNDLALKLPVCRIVKRIQLSADHGDLQLSGASVYFKAARSASQSLNIPSEIKEGQTTDWININSDNDNKRCVSKITFSGHTVNSSDMATLKIIGDD</sequence>
<keyword id="KW-1185">Reference proteome</keyword>
<keyword id="KW-0732">Signal</keyword>
<evidence type="ECO:0000255" key="1">
    <source>
        <dbReference type="HAMAP-Rule" id="MF_01372"/>
    </source>
</evidence>
<protein>
    <recommendedName>
        <fullName evidence="1">UPF0412 protein YaaI</fullName>
    </recommendedName>
</protein>
<feature type="signal peptide" evidence="1">
    <location>
        <begin position="1"/>
        <end position="23"/>
    </location>
</feature>
<feature type="chain" id="PRO_1000184171" description="UPF0412 protein YaaI">
    <location>
        <begin position="24"/>
        <end position="134"/>
    </location>
</feature>
<gene>
    <name evidence="1" type="primary">yaaI</name>
    <name type="ordered locus">EC55989_0013</name>
</gene>
<proteinExistence type="inferred from homology"/>
<reference key="1">
    <citation type="journal article" date="2009" name="PLoS Genet.">
        <title>Organised genome dynamics in the Escherichia coli species results in highly diverse adaptive paths.</title>
        <authorList>
            <person name="Touchon M."/>
            <person name="Hoede C."/>
            <person name="Tenaillon O."/>
            <person name="Barbe V."/>
            <person name="Baeriswyl S."/>
            <person name="Bidet P."/>
            <person name="Bingen E."/>
            <person name="Bonacorsi S."/>
            <person name="Bouchier C."/>
            <person name="Bouvet O."/>
            <person name="Calteau A."/>
            <person name="Chiapello H."/>
            <person name="Clermont O."/>
            <person name="Cruveiller S."/>
            <person name="Danchin A."/>
            <person name="Diard M."/>
            <person name="Dossat C."/>
            <person name="Karoui M.E."/>
            <person name="Frapy E."/>
            <person name="Garry L."/>
            <person name="Ghigo J.M."/>
            <person name="Gilles A.M."/>
            <person name="Johnson J."/>
            <person name="Le Bouguenec C."/>
            <person name="Lescat M."/>
            <person name="Mangenot S."/>
            <person name="Martinez-Jehanne V."/>
            <person name="Matic I."/>
            <person name="Nassif X."/>
            <person name="Oztas S."/>
            <person name="Petit M.A."/>
            <person name="Pichon C."/>
            <person name="Rouy Z."/>
            <person name="Ruf C.S."/>
            <person name="Schneider D."/>
            <person name="Tourret J."/>
            <person name="Vacherie B."/>
            <person name="Vallenet D."/>
            <person name="Medigue C."/>
            <person name="Rocha E.P.C."/>
            <person name="Denamur E."/>
        </authorList>
    </citation>
    <scope>NUCLEOTIDE SEQUENCE [LARGE SCALE GENOMIC DNA]</scope>
    <source>
        <strain>55989 / EAEC</strain>
    </source>
</reference>
<organism>
    <name type="scientific">Escherichia coli (strain 55989 / EAEC)</name>
    <dbReference type="NCBI Taxonomy" id="585055"/>
    <lineage>
        <taxon>Bacteria</taxon>
        <taxon>Pseudomonadati</taxon>
        <taxon>Pseudomonadota</taxon>
        <taxon>Gammaproteobacteria</taxon>
        <taxon>Enterobacterales</taxon>
        <taxon>Enterobacteriaceae</taxon>
        <taxon>Escherichia</taxon>
    </lineage>
</organism>
<dbReference type="EMBL" id="CU928145">
    <property type="protein sequence ID" value="CAU95901.1"/>
    <property type="molecule type" value="Genomic_DNA"/>
</dbReference>
<dbReference type="RefSeq" id="WP_000843559.1">
    <property type="nucleotide sequence ID" value="NC_011748.1"/>
</dbReference>
<dbReference type="KEGG" id="eck:EC55989_0013"/>
<dbReference type="HOGENOM" id="CLU_158661_0_0_6"/>
<dbReference type="Proteomes" id="UP000000746">
    <property type="component" value="Chromosome"/>
</dbReference>
<dbReference type="HAMAP" id="MF_01372">
    <property type="entry name" value="UPF0412"/>
    <property type="match status" value="1"/>
</dbReference>
<dbReference type="InterPro" id="IPR020240">
    <property type="entry name" value="UPF0412_YaaI"/>
</dbReference>
<dbReference type="NCBIfam" id="NF007541">
    <property type="entry name" value="PRK10154.1"/>
    <property type="match status" value="1"/>
</dbReference>
<dbReference type="Pfam" id="PF10807">
    <property type="entry name" value="DUF2541"/>
    <property type="match status" value="1"/>
</dbReference>